<feature type="chain" id="PRO_0000372189" description="Putative antiporter subunit mnhG2">
    <location>
        <begin position="1"/>
        <end position="148"/>
    </location>
</feature>
<feature type="transmembrane region" description="Helical" evidence="2">
    <location>
        <begin position="11"/>
        <end position="31"/>
    </location>
</feature>
<feature type="transmembrane region" description="Helical" evidence="2">
    <location>
        <begin position="51"/>
        <end position="71"/>
    </location>
</feature>
<feature type="transmembrane region" description="Helical" evidence="2">
    <location>
        <begin position="72"/>
        <end position="92"/>
    </location>
</feature>
<feature type="region of interest" description="Disordered" evidence="3">
    <location>
        <begin position="125"/>
        <end position="148"/>
    </location>
</feature>
<feature type="compositionally biased region" description="Basic and acidic residues" evidence="3">
    <location>
        <begin position="127"/>
        <end position="148"/>
    </location>
</feature>
<sequence>MQITSEIVNLIAAIMIFLGSIIALISSIGLIKFQDVFLRSHAATKSSTLSVLLTLVGVIIFFISSQGYLSVRLILALVFINLTSPVGGHLISRAAYRTGAYMYRKSDAPRQTNILLSSSENNTFEQLKQRAHEREERRRKTYEKEHDY</sequence>
<organism>
    <name type="scientific">Staphylococcus saprophyticus subsp. saprophyticus (strain ATCC 15305 / DSM 20229 / NCIMB 8711 / NCTC 7292 / S-41)</name>
    <dbReference type="NCBI Taxonomy" id="342451"/>
    <lineage>
        <taxon>Bacteria</taxon>
        <taxon>Bacillati</taxon>
        <taxon>Bacillota</taxon>
        <taxon>Bacilli</taxon>
        <taxon>Bacillales</taxon>
        <taxon>Staphylococcaceae</taxon>
        <taxon>Staphylococcus</taxon>
    </lineage>
</organism>
<accession>Q49VH5</accession>
<comment type="subunit">
    <text evidence="1">May form a heterooligomeric complex that consists of seven subunits: mnhA2, mnhB2, mnhC2, mnhD2, mnhE2, mnhF2 and mnhG2.</text>
</comment>
<comment type="subcellular location">
    <subcellularLocation>
        <location evidence="4">Cell membrane</location>
        <topology evidence="4">Multi-pass membrane protein</topology>
    </subcellularLocation>
</comment>
<comment type="similarity">
    <text evidence="4">Belongs to the CPA3 antiporters (TC 2.A.63) subunit G family.</text>
</comment>
<evidence type="ECO:0000250" key="1"/>
<evidence type="ECO:0000255" key="2"/>
<evidence type="ECO:0000256" key="3">
    <source>
        <dbReference type="SAM" id="MobiDB-lite"/>
    </source>
</evidence>
<evidence type="ECO:0000305" key="4"/>
<reference key="1">
    <citation type="journal article" date="2005" name="Proc. Natl. Acad. Sci. U.S.A.">
        <title>Whole genome sequence of Staphylococcus saprophyticus reveals the pathogenesis of uncomplicated urinary tract infection.</title>
        <authorList>
            <person name="Kuroda M."/>
            <person name="Yamashita A."/>
            <person name="Hirakawa H."/>
            <person name="Kumano M."/>
            <person name="Morikawa K."/>
            <person name="Higashide M."/>
            <person name="Maruyama A."/>
            <person name="Inose Y."/>
            <person name="Matoba K."/>
            <person name="Toh H."/>
            <person name="Kuhara S."/>
            <person name="Hattori M."/>
            <person name="Ohta T."/>
        </authorList>
    </citation>
    <scope>NUCLEOTIDE SEQUENCE [LARGE SCALE GENOMIC DNA]</scope>
    <source>
        <strain>ATCC 15305 / DSM 20229 / NCIMB 8711 / NCTC 7292 / S-41</strain>
    </source>
</reference>
<proteinExistence type="inferred from homology"/>
<name>MNHG2_STAS1</name>
<protein>
    <recommendedName>
        <fullName>Putative antiporter subunit mnhG2</fullName>
    </recommendedName>
    <alternativeName>
        <fullName>Mrp complex subunit G2</fullName>
    </alternativeName>
    <alternativeName>
        <fullName>Putative NADH-ubiquinone oxidoreductase subunit mnhF2</fullName>
    </alternativeName>
</protein>
<gene>
    <name type="primary">mnhG2</name>
    <name type="synonym">mrpG2</name>
    <name type="ordered locus">SSP2090</name>
</gene>
<keyword id="KW-0050">Antiport</keyword>
<keyword id="KW-1003">Cell membrane</keyword>
<keyword id="KW-0406">Ion transport</keyword>
<keyword id="KW-0472">Membrane</keyword>
<keyword id="KW-1185">Reference proteome</keyword>
<keyword id="KW-0812">Transmembrane</keyword>
<keyword id="KW-1133">Transmembrane helix</keyword>
<keyword id="KW-0813">Transport</keyword>
<dbReference type="EMBL" id="AP008934">
    <property type="protein sequence ID" value="BAE19235.1"/>
    <property type="molecule type" value="Genomic_DNA"/>
</dbReference>
<dbReference type="RefSeq" id="WP_011303733.1">
    <property type="nucleotide sequence ID" value="NZ_MTGA01000039.1"/>
</dbReference>
<dbReference type="SMR" id="Q49VH5"/>
<dbReference type="KEGG" id="ssp:SSP2090"/>
<dbReference type="eggNOG" id="COG1320">
    <property type="taxonomic scope" value="Bacteria"/>
</dbReference>
<dbReference type="HOGENOM" id="CLU_121334_0_3_9"/>
<dbReference type="OrthoDB" id="9806575at2"/>
<dbReference type="Proteomes" id="UP000006371">
    <property type="component" value="Chromosome"/>
</dbReference>
<dbReference type="GO" id="GO:0005886">
    <property type="term" value="C:plasma membrane"/>
    <property type="evidence" value="ECO:0007669"/>
    <property type="project" value="UniProtKB-SubCell"/>
</dbReference>
<dbReference type="GO" id="GO:0015385">
    <property type="term" value="F:sodium:proton antiporter activity"/>
    <property type="evidence" value="ECO:0007669"/>
    <property type="project" value="TreeGrafter"/>
</dbReference>
<dbReference type="InterPro" id="IPR005133">
    <property type="entry name" value="PhaG_MnhG_YufB"/>
</dbReference>
<dbReference type="NCBIfam" id="TIGR01300">
    <property type="entry name" value="CPA3_mnhG_phaG"/>
    <property type="match status" value="1"/>
</dbReference>
<dbReference type="NCBIfam" id="NF009236">
    <property type="entry name" value="PRK12586.1"/>
    <property type="match status" value="1"/>
</dbReference>
<dbReference type="PANTHER" id="PTHR34703">
    <property type="entry name" value="ANTIPORTER SUBUNIT MNHG2-RELATED"/>
    <property type="match status" value="1"/>
</dbReference>
<dbReference type="PANTHER" id="PTHR34703:SF1">
    <property type="entry name" value="ANTIPORTER SUBUNIT MNHG2-RELATED"/>
    <property type="match status" value="1"/>
</dbReference>
<dbReference type="Pfam" id="PF03334">
    <property type="entry name" value="PhaG_MnhG_YufB"/>
    <property type="match status" value="1"/>
</dbReference>